<comment type="function">
    <text evidence="1">Catalyzes the synthesis of polyP from ATP or GTP. Can also use inorganic polyphosphate (polyP) as a donor to convert ADP to ATP, but the activity is 10-fold higher in vitro for polyP synthesis than for ATP formation.</text>
</comment>
<comment type="catalytic activity">
    <reaction evidence="1">
        <text>[phosphate](n) + ATP = [phosphate](n+1) + ADP</text>
        <dbReference type="Rhea" id="RHEA:19573"/>
        <dbReference type="Rhea" id="RHEA-COMP:9859"/>
        <dbReference type="Rhea" id="RHEA-COMP:14280"/>
        <dbReference type="ChEBI" id="CHEBI:16838"/>
        <dbReference type="ChEBI" id="CHEBI:30616"/>
        <dbReference type="ChEBI" id="CHEBI:456216"/>
        <dbReference type="EC" id="2.7.4.1"/>
    </reaction>
    <physiologicalReaction direction="left-to-right" evidence="1">
        <dbReference type="Rhea" id="RHEA:19574"/>
    </physiologicalReaction>
</comment>
<comment type="catalytic activity">
    <reaction evidence="1">
        <text>[phosphate](n) + GTP = [phosphate](n+1) + GDP</text>
        <dbReference type="Rhea" id="RHEA:55412"/>
        <dbReference type="Rhea" id="RHEA-COMP:9859"/>
        <dbReference type="Rhea" id="RHEA-COMP:14280"/>
        <dbReference type="ChEBI" id="CHEBI:16838"/>
        <dbReference type="ChEBI" id="CHEBI:37565"/>
        <dbReference type="ChEBI" id="CHEBI:58189"/>
    </reaction>
    <physiologicalReaction direction="left-to-right" evidence="1">
        <dbReference type="Rhea" id="RHEA:55413"/>
    </physiologicalReaction>
</comment>
<comment type="cofactor">
    <cofactor evidence="1">
        <name>Mn(2+)</name>
        <dbReference type="ChEBI" id="CHEBI:29035"/>
    </cofactor>
</comment>
<comment type="biophysicochemical properties">
    <kinetics>
        <KM evidence="1">0.17 mM for ATP</KM>
        <KM evidence="1">0.14 mM for GTP</KM>
        <KM evidence="1">15 mM for polyP</KM>
        <KM evidence="1">0.04 mM for ADP</KM>
        <Vmax evidence="1">31.0 umol/min/mg enzyme with ATP as substrate for polyP formation</Vmax>
        <Vmax evidence="1">14.0 umol/min/mg enzyme with GTP as substrate for polyP formation</Vmax>
        <Vmax evidence="1">4.0 umol/min/mg enzyme with ADP as substrate for ATP formation</Vmax>
    </kinetics>
    <phDependence>
        <text evidence="1">Optimum pH is 7.2.</text>
    </phDependence>
</comment>
<comment type="subunit">
    <text evidence="1">Homotetramer.</text>
</comment>
<comment type="disruption phenotype">
    <text evidence="1">Deletion mutant accumulates very little cellular polyP.</text>
</comment>
<comment type="similarity">
    <text evidence="3">Belongs to the polyphosphate kinase 2 (PPK2) family. Class I subfamily.</text>
</comment>
<reference key="1">
    <citation type="journal article" date="2003" name="Appl. Microbiol. Biotechnol.">
        <title>The Corynebacterium glutamicum genome: features and impacts on biotechnological processes.</title>
        <authorList>
            <person name="Ikeda M."/>
            <person name="Nakagawa S."/>
        </authorList>
    </citation>
    <scope>NUCLEOTIDE SEQUENCE [LARGE SCALE GENOMIC DNA]</scope>
    <source>
        <strain>ATCC 13032 / DSM 20300 / JCM 1318 / BCRC 11384 / CCUG 27702 / LMG 3730 / NBRC 12168 / NCIMB 10025 / NRRL B-2784 / 534</strain>
    </source>
</reference>
<reference key="2">
    <citation type="journal article" date="2007" name="Appl. Environ. Microbiol.">
        <title>NCgl2620 encodes a class II polyphosphate kinase in Corynebacterium glutamicum.</title>
        <authorList>
            <person name="Lindner S.N."/>
            <person name="Vidaurre D."/>
            <person name="Willbold S."/>
            <person name="Schoberth S.M."/>
            <person name="Wendisch V.F."/>
        </authorList>
    </citation>
    <scope>FUNCTION</scope>
    <scope>CATALYTIC ACTIVITY</scope>
    <scope>COFACTOR</scope>
    <scope>BIOPHYSICOCHEMICAL PROPERTIES</scope>
    <scope>SUBUNIT</scope>
    <scope>DISRUPTION PHENOTYPE</scope>
    <source>
        <strain>ATCC 13032 / DSM 20300 / JCM 1318 / BCRC 11384 / CCUG 27702 / LMG 3730 / NBRC 12168 / NCIMB 10025 / NRRL B-2784 / 534</strain>
    </source>
</reference>
<evidence type="ECO:0000269" key="1">
    <source>
    </source>
</evidence>
<evidence type="ECO:0000303" key="2">
    <source>
    </source>
</evidence>
<evidence type="ECO:0000305" key="3"/>
<evidence type="ECO:0000312" key="4">
    <source>
        <dbReference type="EMBL" id="BAC00108.1"/>
    </source>
</evidence>
<feature type="chain" id="PRO_0000442584" description="Polyphosphate kinase PPK2B">
    <location>
        <begin position="1"/>
        <end position="306"/>
    </location>
</feature>
<accession>Q8NM65</accession>
<protein>
    <recommendedName>
        <fullName evidence="3">Polyphosphate kinase PPK2B</fullName>
        <ecNumber evidence="1">2.7.4.1</ecNumber>
    </recommendedName>
</protein>
<dbReference type="EC" id="2.7.4.1" evidence="1"/>
<dbReference type="EMBL" id="BA000036">
    <property type="protein sequence ID" value="BAC00108.1"/>
    <property type="molecule type" value="Genomic_DNA"/>
</dbReference>
<dbReference type="RefSeq" id="NP_601909.1">
    <property type="nucleotide sequence ID" value="NC_003450.3"/>
</dbReference>
<dbReference type="SMR" id="Q8NM65"/>
<dbReference type="STRING" id="196627.cg3007"/>
<dbReference type="KEGG" id="cgl:Cgl2714"/>
<dbReference type="PATRIC" id="fig|196627.13.peg.2645"/>
<dbReference type="eggNOG" id="COG2326">
    <property type="taxonomic scope" value="Bacteria"/>
</dbReference>
<dbReference type="HOGENOM" id="CLU_048699_2_2_11"/>
<dbReference type="OrthoDB" id="9775224at2"/>
<dbReference type="BioCyc" id="CORYNE:G18NG-12331-MONOMER"/>
<dbReference type="BRENDA" id="2.7.4.1">
    <property type="organism ID" value="960"/>
</dbReference>
<dbReference type="Proteomes" id="UP000000582">
    <property type="component" value="Chromosome"/>
</dbReference>
<dbReference type="GO" id="GO:0008976">
    <property type="term" value="F:polyphosphate kinase activity"/>
    <property type="evidence" value="ECO:0007669"/>
    <property type="project" value="UniProtKB-EC"/>
</dbReference>
<dbReference type="GO" id="GO:0006793">
    <property type="term" value="P:phosphorus metabolic process"/>
    <property type="evidence" value="ECO:0007669"/>
    <property type="project" value="InterPro"/>
</dbReference>
<dbReference type="Gene3D" id="3.40.50.300">
    <property type="entry name" value="P-loop containing nucleotide triphosphate hydrolases"/>
    <property type="match status" value="1"/>
</dbReference>
<dbReference type="InterPro" id="IPR027417">
    <property type="entry name" value="P-loop_NTPase"/>
</dbReference>
<dbReference type="InterPro" id="IPR022488">
    <property type="entry name" value="PPK2-related"/>
</dbReference>
<dbReference type="InterPro" id="IPR022486">
    <property type="entry name" value="PPK2_PA0141"/>
</dbReference>
<dbReference type="NCBIfam" id="TIGR03707">
    <property type="entry name" value="PPK2_P_aer"/>
    <property type="match status" value="1"/>
</dbReference>
<dbReference type="PANTHER" id="PTHR34383:SF1">
    <property type="entry name" value="ADP-POLYPHOSPHATE PHOSPHOTRANSFERASE"/>
    <property type="match status" value="1"/>
</dbReference>
<dbReference type="PANTHER" id="PTHR34383">
    <property type="entry name" value="POLYPHOSPHATE:AMP PHOSPHOTRANSFERASE-RELATED"/>
    <property type="match status" value="1"/>
</dbReference>
<dbReference type="Pfam" id="PF03976">
    <property type="entry name" value="PPK2"/>
    <property type="match status" value="1"/>
</dbReference>
<dbReference type="SUPFAM" id="SSF52540">
    <property type="entry name" value="P-loop containing nucleoside triphosphate hydrolases"/>
    <property type="match status" value="1"/>
</dbReference>
<sequence length="306" mass="36044">MVGKLPIMAETNENDLPVIDLAQIEGYVVDDSDEDDPVLLRPDGTPIETWREDFPYEERVTREDYEKVKRSLQIELLKWQNWTKETGQRHIILFEGRDAAGKGGTIKRFNEHLNPRGARTVALEKPSPRESTSWYFQRYIQHFPAAGEIVFFDRSWYNRSGVERVMGFCTESQHAEFLREVPMLENMILGSGISLTKFWFSVTRKEQRTRFAIRQVDPVRQWKLSPMDLASLDRWDDYTRAKEEQFRYTDTDESPWITIKSNDKKRARINAMRYVLSKFDYTDKDYELVGEPDPKVVLRGRDQIGD</sequence>
<name>PK21B_CORGL</name>
<keyword id="KW-0418">Kinase</keyword>
<keyword id="KW-0464">Manganese</keyword>
<keyword id="KW-1185">Reference proteome</keyword>
<keyword id="KW-0808">Transferase</keyword>
<proteinExistence type="evidence at protein level"/>
<organism>
    <name type="scientific">Corynebacterium glutamicum (strain ATCC 13032 / DSM 20300 / JCM 1318 / BCRC 11384 / CCUG 27702 / LMG 3730 / NBRC 12168 / NCIMB 10025 / NRRL B-2784 / 534)</name>
    <dbReference type="NCBI Taxonomy" id="196627"/>
    <lineage>
        <taxon>Bacteria</taxon>
        <taxon>Bacillati</taxon>
        <taxon>Actinomycetota</taxon>
        <taxon>Actinomycetes</taxon>
        <taxon>Mycobacteriales</taxon>
        <taxon>Corynebacteriaceae</taxon>
        <taxon>Corynebacterium</taxon>
    </lineage>
</organism>
<gene>
    <name evidence="2" type="primary">ppk2B</name>
    <name evidence="4" type="ordered locus">Cgl2714</name>
</gene>